<evidence type="ECO:0000250" key="1">
    <source>
        <dbReference type="UniProtKB" id="Q96MT8"/>
    </source>
</evidence>
<evidence type="ECO:0000255" key="2"/>
<evidence type="ECO:0000256" key="3">
    <source>
        <dbReference type="SAM" id="MobiDB-lite"/>
    </source>
</evidence>
<evidence type="ECO:0000269" key="4">
    <source>
    </source>
</evidence>
<evidence type="ECO:0000269" key="5">
    <source>
    </source>
</evidence>
<evidence type="ECO:0000303" key="6">
    <source>
    </source>
</evidence>
<evidence type="ECO:0000303" key="7">
    <source>
    </source>
</evidence>
<evidence type="ECO:0000305" key="8"/>
<evidence type="ECO:0000305" key="9">
    <source>
    </source>
</evidence>
<evidence type="ECO:0000312" key="10">
    <source>
        <dbReference type="MGI" id="MGI:2158560"/>
    </source>
</evidence>
<evidence type="ECO:0007744" key="11">
    <source>
    </source>
</evidence>
<organism>
    <name type="scientific">Mus musculus</name>
    <name type="common">Mouse</name>
    <dbReference type="NCBI Taxonomy" id="10090"/>
    <lineage>
        <taxon>Eukaryota</taxon>
        <taxon>Metazoa</taxon>
        <taxon>Chordata</taxon>
        <taxon>Craniata</taxon>
        <taxon>Vertebrata</taxon>
        <taxon>Euteleostomi</taxon>
        <taxon>Mammalia</taxon>
        <taxon>Eutheria</taxon>
        <taxon>Euarchontoglires</taxon>
        <taxon>Glires</taxon>
        <taxon>Rodentia</taxon>
        <taxon>Myomorpha</taxon>
        <taxon>Muroidea</taxon>
        <taxon>Muridae</taxon>
        <taxon>Murinae</taxon>
        <taxon>Mus</taxon>
        <taxon>Mus</taxon>
    </lineage>
</organism>
<keyword id="KW-0007">Acetylation</keyword>
<keyword id="KW-0025">Alternative splicing</keyword>
<keyword id="KW-0131">Cell cycle</keyword>
<keyword id="KW-0132">Cell division</keyword>
<keyword id="KW-0175">Coiled coil</keyword>
<keyword id="KW-0963">Cytoplasm</keyword>
<keyword id="KW-0206">Cytoskeleton</keyword>
<keyword id="KW-0227">DNA damage</keyword>
<keyword id="KW-0498">Mitosis</keyword>
<keyword id="KW-0597">Phosphoprotein</keyword>
<keyword id="KW-1185">Reference proteome</keyword>
<keyword id="KW-0832">Ubl conjugation</keyword>
<feature type="chain" id="PRO_0000381804" description="Centrosomal protein of 63 kDa">
    <location>
        <begin position="1"/>
        <end position="700"/>
    </location>
</feature>
<feature type="region of interest" description="Disordered" evidence="3">
    <location>
        <begin position="570"/>
        <end position="603"/>
    </location>
</feature>
<feature type="coiled-coil region" evidence="2">
    <location>
        <begin position="73"/>
        <end position="283"/>
    </location>
</feature>
<feature type="coiled-coil region" evidence="2">
    <location>
        <begin position="343"/>
        <end position="533"/>
    </location>
</feature>
<feature type="compositionally biased region" description="Low complexity" evidence="3">
    <location>
        <begin position="593"/>
        <end position="603"/>
    </location>
</feature>
<feature type="modified residue" description="N-acetylmethionine" evidence="1">
    <location>
        <position position="1"/>
    </location>
</feature>
<feature type="modified residue" description="Phosphoserine" evidence="1">
    <location>
        <position position="278"/>
    </location>
</feature>
<feature type="splice variant" id="VSP_037843" description="In isoform 2." evidence="7">
    <location>
        <begin position="1"/>
        <end position="28"/>
    </location>
</feature>
<feature type="splice variant" id="VSP_037844" description="In isoform 3." evidence="6">
    <location>
        <begin position="487"/>
        <end position="648"/>
    </location>
</feature>
<feature type="splice variant" id="VSP_037845" description="In isoform 2." evidence="7">
    <original>AKEISLADLQENYIEALN</original>
    <variation>VHTSTLSFCVFEAFERNC</variation>
    <location>
        <begin position="487"/>
        <end position="504"/>
    </location>
</feature>
<feature type="splice variant" id="VSP_037846" description="In isoform 2." evidence="7">
    <location>
        <begin position="505"/>
        <end position="700"/>
    </location>
</feature>
<feature type="modified residue" description="Phosphoserine" evidence="11">
    <location sequence="Q3UPP8-3">
        <position position="488"/>
    </location>
</feature>
<feature type="modified residue" description="Phosphoserine" evidence="11">
    <location sequence="Q3UPP8-3">
        <position position="492"/>
    </location>
</feature>
<gene>
    <name evidence="10" type="primary">Cep63</name>
    <name type="synonym">D9Mgc48e</name>
</gene>
<proteinExistence type="evidence at protein level"/>
<accession>Q3UPP8</accession>
<accession>Q80ZM0</accession>
<reference key="1">
    <citation type="journal article" date="2005" name="Science">
        <title>The transcriptional landscape of the mammalian genome.</title>
        <authorList>
            <person name="Carninci P."/>
            <person name="Kasukawa T."/>
            <person name="Katayama S."/>
            <person name="Gough J."/>
            <person name="Frith M.C."/>
            <person name="Maeda N."/>
            <person name="Oyama R."/>
            <person name="Ravasi T."/>
            <person name="Lenhard B."/>
            <person name="Wells C."/>
            <person name="Kodzius R."/>
            <person name="Shimokawa K."/>
            <person name="Bajic V.B."/>
            <person name="Brenner S.E."/>
            <person name="Batalov S."/>
            <person name="Forrest A.R."/>
            <person name="Zavolan M."/>
            <person name="Davis M.J."/>
            <person name="Wilming L.G."/>
            <person name="Aidinis V."/>
            <person name="Allen J.E."/>
            <person name="Ambesi-Impiombato A."/>
            <person name="Apweiler R."/>
            <person name="Aturaliya R.N."/>
            <person name="Bailey T.L."/>
            <person name="Bansal M."/>
            <person name="Baxter L."/>
            <person name="Beisel K.W."/>
            <person name="Bersano T."/>
            <person name="Bono H."/>
            <person name="Chalk A.M."/>
            <person name="Chiu K.P."/>
            <person name="Choudhary V."/>
            <person name="Christoffels A."/>
            <person name="Clutterbuck D.R."/>
            <person name="Crowe M.L."/>
            <person name="Dalla E."/>
            <person name="Dalrymple B.P."/>
            <person name="de Bono B."/>
            <person name="Della Gatta G."/>
            <person name="di Bernardo D."/>
            <person name="Down T."/>
            <person name="Engstrom P."/>
            <person name="Fagiolini M."/>
            <person name="Faulkner G."/>
            <person name="Fletcher C.F."/>
            <person name="Fukushima T."/>
            <person name="Furuno M."/>
            <person name="Futaki S."/>
            <person name="Gariboldi M."/>
            <person name="Georgii-Hemming P."/>
            <person name="Gingeras T.R."/>
            <person name="Gojobori T."/>
            <person name="Green R.E."/>
            <person name="Gustincich S."/>
            <person name="Harbers M."/>
            <person name="Hayashi Y."/>
            <person name="Hensch T.K."/>
            <person name="Hirokawa N."/>
            <person name="Hill D."/>
            <person name="Huminiecki L."/>
            <person name="Iacono M."/>
            <person name="Ikeo K."/>
            <person name="Iwama A."/>
            <person name="Ishikawa T."/>
            <person name="Jakt M."/>
            <person name="Kanapin A."/>
            <person name="Katoh M."/>
            <person name="Kawasawa Y."/>
            <person name="Kelso J."/>
            <person name="Kitamura H."/>
            <person name="Kitano H."/>
            <person name="Kollias G."/>
            <person name="Krishnan S.P."/>
            <person name="Kruger A."/>
            <person name="Kummerfeld S.K."/>
            <person name="Kurochkin I.V."/>
            <person name="Lareau L.F."/>
            <person name="Lazarevic D."/>
            <person name="Lipovich L."/>
            <person name="Liu J."/>
            <person name="Liuni S."/>
            <person name="McWilliam S."/>
            <person name="Madan Babu M."/>
            <person name="Madera M."/>
            <person name="Marchionni L."/>
            <person name="Matsuda H."/>
            <person name="Matsuzawa S."/>
            <person name="Miki H."/>
            <person name="Mignone F."/>
            <person name="Miyake S."/>
            <person name="Morris K."/>
            <person name="Mottagui-Tabar S."/>
            <person name="Mulder N."/>
            <person name="Nakano N."/>
            <person name="Nakauchi H."/>
            <person name="Ng P."/>
            <person name="Nilsson R."/>
            <person name="Nishiguchi S."/>
            <person name="Nishikawa S."/>
            <person name="Nori F."/>
            <person name="Ohara O."/>
            <person name="Okazaki Y."/>
            <person name="Orlando V."/>
            <person name="Pang K.C."/>
            <person name="Pavan W.J."/>
            <person name="Pavesi G."/>
            <person name="Pesole G."/>
            <person name="Petrovsky N."/>
            <person name="Piazza S."/>
            <person name="Reed J."/>
            <person name="Reid J.F."/>
            <person name="Ring B.Z."/>
            <person name="Ringwald M."/>
            <person name="Rost B."/>
            <person name="Ruan Y."/>
            <person name="Salzberg S.L."/>
            <person name="Sandelin A."/>
            <person name="Schneider C."/>
            <person name="Schoenbach C."/>
            <person name="Sekiguchi K."/>
            <person name="Semple C.A."/>
            <person name="Seno S."/>
            <person name="Sessa L."/>
            <person name="Sheng Y."/>
            <person name="Shibata Y."/>
            <person name="Shimada H."/>
            <person name="Shimada K."/>
            <person name="Silva D."/>
            <person name="Sinclair B."/>
            <person name="Sperling S."/>
            <person name="Stupka E."/>
            <person name="Sugiura K."/>
            <person name="Sultana R."/>
            <person name="Takenaka Y."/>
            <person name="Taki K."/>
            <person name="Tammoja K."/>
            <person name="Tan S.L."/>
            <person name="Tang S."/>
            <person name="Taylor M.S."/>
            <person name="Tegner J."/>
            <person name="Teichmann S.A."/>
            <person name="Ueda H.R."/>
            <person name="van Nimwegen E."/>
            <person name="Verardo R."/>
            <person name="Wei C.L."/>
            <person name="Yagi K."/>
            <person name="Yamanishi H."/>
            <person name="Zabarovsky E."/>
            <person name="Zhu S."/>
            <person name="Zimmer A."/>
            <person name="Hide W."/>
            <person name="Bult C."/>
            <person name="Grimmond S.M."/>
            <person name="Teasdale R.D."/>
            <person name="Liu E.T."/>
            <person name="Brusic V."/>
            <person name="Quackenbush J."/>
            <person name="Wahlestedt C."/>
            <person name="Mattick J.S."/>
            <person name="Hume D.A."/>
            <person name="Kai C."/>
            <person name="Sasaki D."/>
            <person name="Tomaru Y."/>
            <person name="Fukuda S."/>
            <person name="Kanamori-Katayama M."/>
            <person name="Suzuki M."/>
            <person name="Aoki J."/>
            <person name="Arakawa T."/>
            <person name="Iida J."/>
            <person name="Imamura K."/>
            <person name="Itoh M."/>
            <person name="Kato T."/>
            <person name="Kawaji H."/>
            <person name="Kawagashira N."/>
            <person name="Kawashima T."/>
            <person name="Kojima M."/>
            <person name="Kondo S."/>
            <person name="Konno H."/>
            <person name="Nakano K."/>
            <person name="Ninomiya N."/>
            <person name="Nishio T."/>
            <person name="Okada M."/>
            <person name="Plessy C."/>
            <person name="Shibata K."/>
            <person name="Shiraki T."/>
            <person name="Suzuki S."/>
            <person name="Tagami M."/>
            <person name="Waki K."/>
            <person name="Watahiki A."/>
            <person name="Okamura-Oho Y."/>
            <person name="Suzuki H."/>
            <person name="Kawai J."/>
            <person name="Hayashizaki Y."/>
        </authorList>
    </citation>
    <scope>NUCLEOTIDE SEQUENCE [LARGE SCALE MRNA] (ISOFORM 2)</scope>
    <source>
        <strain>C57BL/6J</strain>
        <tissue>Ovary</tissue>
    </source>
</reference>
<reference key="2">
    <citation type="journal article" date="2009" name="PLoS Biol.">
        <title>Lineage-specific biology revealed by a finished genome assembly of the mouse.</title>
        <authorList>
            <person name="Church D.M."/>
            <person name="Goodstadt L."/>
            <person name="Hillier L.W."/>
            <person name="Zody M.C."/>
            <person name="Goldstein S."/>
            <person name="She X."/>
            <person name="Bult C.J."/>
            <person name="Agarwala R."/>
            <person name="Cherry J.L."/>
            <person name="DiCuccio M."/>
            <person name="Hlavina W."/>
            <person name="Kapustin Y."/>
            <person name="Meric P."/>
            <person name="Maglott D."/>
            <person name="Birtle Z."/>
            <person name="Marques A.C."/>
            <person name="Graves T."/>
            <person name="Zhou S."/>
            <person name="Teague B."/>
            <person name="Potamousis K."/>
            <person name="Churas C."/>
            <person name="Place M."/>
            <person name="Herschleb J."/>
            <person name="Runnheim R."/>
            <person name="Forrest D."/>
            <person name="Amos-Landgraf J."/>
            <person name="Schwartz D.C."/>
            <person name="Cheng Z."/>
            <person name="Lindblad-Toh K."/>
            <person name="Eichler E.E."/>
            <person name="Ponting C.P."/>
        </authorList>
    </citation>
    <scope>NUCLEOTIDE SEQUENCE [LARGE SCALE GENOMIC DNA]</scope>
    <source>
        <strain>C57BL/6J</strain>
    </source>
</reference>
<reference key="3">
    <citation type="journal article" date="2004" name="Genome Res.">
        <title>The status, quality, and expansion of the NIH full-length cDNA project: the Mammalian Gene Collection (MGC).</title>
        <authorList>
            <consortium name="The MGC Project Team"/>
        </authorList>
    </citation>
    <scope>NUCLEOTIDE SEQUENCE [LARGE SCALE MRNA] OF 178-700 (ISOFORM 3)</scope>
    <source>
        <tissue>Embryo</tissue>
    </source>
</reference>
<reference key="4">
    <citation type="journal article" date="2010" name="Cell">
        <title>A tissue-specific atlas of mouse protein phosphorylation and expression.</title>
        <authorList>
            <person name="Huttlin E.L."/>
            <person name="Jedrychowski M.P."/>
            <person name="Elias J.E."/>
            <person name="Goswami T."/>
            <person name="Rad R."/>
            <person name="Beausoleil S.A."/>
            <person name="Villen J."/>
            <person name="Haas W."/>
            <person name="Sowa M.E."/>
            <person name="Gygi S.P."/>
        </authorList>
    </citation>
    <scope>PHOSPHORYLATION [LARGE SCALE ANALYSIS] AT SER-488 AND SER-492 (ISOFORM 3)</scope>
    <scope>IDENTIFICATION BY MASS SPECTROMETRY [LARGE SCALE ANALYSIS]</scope>
    <source>
        <tissue>Spleen</tissue>
    </source>
</reference>
<reference key="5">
    <citation type="journal article" date="2011" name="Nat. Genet.">
        <title>A primary microcephaly protein complex forms a ring around parental centrioles.</title>
        <authorList>
            <person name="Sir J.H."/>
            <person name="Barr A.R."/>
            <person name="Nicholas A.K."/>
            <person name="Carvalho O.P."/>
            <person name="Khurshid M."/>
            <person name="Sossick A."/>
            <person name="Reichelt S."/>
            <person name="D'Santos C."/>
            <person name="Woods C.G."/>
            <person name="Gergely F."/>
        </authorList>
    </citation>
    <scope>SUBCELLULAR LOCATION</scope>
</reference>
<reference key="6">
    <citation type="journal article" date="2013" name="Nat. Cell Biol.">
        <title>The Cep63 paralogue Deup1 enables massive de novo centriole biogenesis for vertebrate multiciliogenesis.</title>
        <authorList>
            <person name="Zhao H."/>
            <person name="Zhu L."/>
            <person name="Zhu Y."/>
            <person name="Cao J."/>
            <person name="Li S."/>
            <person name="Huang Q."/>
            <person name="Xu T."/>
            <person name="Huang X."/>
            <person name="Yan X."/>
            <person name="Zhu X."/>
        </authorList>
    </citation>
    <scope>FUNCTION</scope>
    <scope>SUBCELLULAR LOCATION</scope>
</reference>
<sequence>MEALLEGIQNRGHSGGFLTSCEAELQELMKQIDIMVAHKKSEWEGQTHALETCLDIRDRELKALRSQLDMKHKEVGILHQQIEEHEKTKQEMAMEYKEELLKLQEELSRLKRSYEKLQKKQLREFRGNTKSFREDRSEIERLTGKIEEFRQKSLDWEKQRLIYQQQVSSLEAQRKALAEQSEIIQAQLANRKQKLESVELSSQSEIQHLNSKLERAKDTICANELEIERLNIRVNDLMGTNMTILQDHRQKEEKLRESEKLLEALQEEQKELKASLQSQETFILEAKMQEKLQTTLKAVGTQQSVERPLEDCQKERKYSSPGQGVLDNVLSQLDFSHSSEELLQAEVTRLEGSLESVSATCKQLSQELMEKYEELKRMEGHNNEYRTEIKKLKEQILQADQTYSSALEGMKMEISQLTRELHQRDITIASAKCSSSDMEKQLKAEMQKAEEKAVEHKEILSQLESLKLENHRLSETVMKLELGLHEAKEISLADLQENYIEALNKLVSENQQLQKDLMSTKSELEHATNMCKKKDGEIFNPAHSRAAGFKNAELKPIHGQHRHDGIKTEQYKTGHHSPRGQTLDSIDPVARGPSPLSSHISPGSSTVSLPSNFLFEAHSLPSVLDINDVNFSDSLSDCMNDQEEFVSSGSLPTSPLGSIATRFLEEEELRSHHILERLDAHIEELKRESEKTVRQFTALV</sequence>
<name>CEP63_MOUSE</name>
<protein>
    <recommendedName>
        <fullName evidence="8">Centrosomal protein of 63 kDa</fullName>
        <shortName>Cep63</shortName>
    </recommendedName>
</protein>
<comment type="function">
    <text evidence="1 5">Required for normal spindle assembly (PubMed:24240477). Plays a key role in mother-centriole-dependent centriole duplication; the function also seems to involve CEP152, CDK5RAP2 and WDR62 through a stepwise assembled complex at the centrosome that recruits CDK2 required for centriole duplication (By similarity). Reported to be required for centrosomal recruitment of CEP152; however, this function has been questioned (By similarity). Also recruits CDK1 to centrosomes (By similarity). Plays a role in DNA damage response (By similarity). Following DNA damage, such as double-strand breaks (DSBs), is removed from centrosomes; this leads to the inactivation of spindle assembly and delay in mitotic progression (By similarity). Promotes stabilization of FXR1 protein by inhibiting FXR1 ubiquitination (By similarity).</text>
</comment>
<comment type="subunit">
    <text evidence="1">Interacts with CEP152 and CDK1; these interactions recruit both ligands to centrosomes. Interacts with CDK2, CDK5RAP2, WDR62, CEP90, KIAA0753/moonraker and CCDC14. CEP63, CDK5RAP2, CEP152, WDR62 are proposed to form a stepwise assembled complex at the centrosome forming a ring near parental centrioles. Interacts with CCDC57; the interaction is required for their location to proximal end of centrioles. Interacts with FXR1; promoting its stabilization.</text>
</comment>
<comment type="interaction">
    <interactant intactId="EBI-16081652">
        <id>Q3UPP8</id>
    </interactant>
    <interactant intactId="EBI-2554268">
        <id>A2AUM9</id>
        <label>Cep152</label>
    </interactant>
    <organismsDiffer>false</organismsDiffer>
    <experiments>2</experiments>
</comment>
<comment type="subcellular location">
    <subcellularLocation>
        <location evidence="4">Cytoplasm</location>
        <location evidence="4">Cytoskeleton</location>
        <location evidence="4">Microtubule organizing center</location>
        <location evidence="4">Centrosome</location>
    </subcellularLocation>
    <subcellularLocation>
        <location evidence="5">Cytoplasm</location>
        <location evidence="5">Cytoskeleton</location>
        <location evidence="5">Microtubule organizing center</location>
        <location evidence="5">Centrosome</location>
        <location evidence="5">Centriole</location>
    </subcellularLocation>
    <subcellularLocation>
        <location evidence="1">Cytoplasm</location>
        <location evidence="1">Cytoskeleton</location>
        <location evidence="1">Microtubule organizing center</location>
        <location evidence="1">Centrosome</location>
        <location evidence="1">Centriolar satellite</location>
    </subcellularLocation>
    <text evidence="1 4 5">Colocalizes with CDK5RAP2, CEP152 and WDR62in a discrete ring around the proximal end of the parental centriole. At this site, a cohesive structure is predicted to engage parental centrioles and procentrioles.</text>
</comment>
<comment type="alternative products">
    <event type="alternative splicing"/>
    <isoform>
        <id>Q3UPP8-1</id>
        <name>1</name>
        <sequence type="displayed"/>
    </isoform>
    <isoform>
        <id>Q3UPP8-2</id>
        <name>2</name>
        <sequence type="described" ref="VSP_037843 VSP_037845 VSP_037846"/>
    </isoform>
    <isoform>
        <id>Q3UPP8-3</id>
        <name>3</name>
        <sequence type="described" ref="VSP_037844"/>
    </isoform>
</comment>
<comment type="PTM">
    <text evidence="1">Polyubiquitinated via 'Lys-48'-linked ubiquitin, leading to its degradation. Deubiquitinated by USP36, promoting its stabilization.</text>
</comment>
<comment type="miscellaneous">
    <text evidence="9">CEP63 and DEUP1 paralogs are both involved in centriole amplification: while CEP63 mediates mother-centriole-dependent centriole duplication, DEUP1 mediates de novo centriole amplification in multiciliated cells.</text>
</comment>
<comment type="similarity">
    <text evidence="8">Belongs to the CEP63 family.</text>
</comment>
<comment type="sequence caution" evidence="8">
    <conflict type="frameshift">
        <sequence resource="EMBL-CDS" id="AAH48718"/>
    </conflict>
</comment>
<dbReference type="EMBL" id="AK143341">
    <property type="protein sequence ID" value="BAE25347.1"/>
    <property type="molecule type" value="mRNA"/>
</dbReference>
<dbReference type="EMBL" id="AL450317">
    <property type="status" value="NOT_ANNOTATED_CDS"/>
    <property type="molecule type" value="Genomic_DNA"/>
</dbReference>
<dbReference type="EMBL" id="CT573150">
    <property type="status" value="NOT_ANNOTATED_CDS"/>
    <property type="molecule type" value="Genomic_DNA"/>
</dbReference>
<dbReference type="EMBL" id="BC048718">
    <property type="protein sequence ID" value="AAH48718.1"/>
    <property type="status" value="ALT_FRAME"/>
    <property type="molecule type" value="mRNA"/>
</dbReference>
<dbReference type="RefSeq" id="NP_001394630.1">
    <molecule id="Q3UPP8-1"/>
    <property type="nucleotide sequence ID" value="NM_001407701.1"/>
</dbReference>
<dbReference type="RefSeq" id="NP_001394631.1">
    <molecule id="Q3UPP8-1"/>
    <property type="nucleotide sequence ID" value="NM_001407702.1"/>
</dbReference>
<dbReference type="RefSeq" id="NP_001394640.1">
    <molecule id="Q3UPP8-3"/>
    <property type="nucleotide sequence ID" value="NM_001407711.1"/>
</dbReference>
<dbReference type="RefSeq" id="NP_001394641.1">
    <molecule id="Q3UPP8-3"/>
    <property type="nucleotide sequence ID" value="NM_001407712.1"/>
</dbReference>
<dbReference type="RefSeq" id="NP_001394642.1">
    <molecule id="Q3UPP8-3"/>
    <property type="nucleotide sequence ID" value="NM_001407713.1"/>
</dbReference>
<dbReference type="RefSeq" id="XP_006511808.1">
    <property type="nucleotide sequence ID" value="XM_006511745.3"/>
</dbReference>
<dbReference type="RefSeq" id="XP_017168899.1">
    <property type="nucleotide sequence ID" value="XM_017313410.1"/>
</dbReference>
<dbReference type="RefSeq" id="XP_017168903.1">
    <property type="nucleotide sequence ID" value="XM_017313414.1"/>
</dbReference>
<dbReference type="SMR" id="Q3UPP8"/>
<dbReference type="BioGRID" id="205780">
    <property type="interactions" value="3"/>
</dbReference>
<dbReference type="DIP" id="DIP-61756N"/>
<dbReference type="FunCoup" id="Q3UPP8">
    <property type="interactions" value="953"/>
</dbReference>
<dbReference type="IntAct" id="Q3UPP8">
    <property type="interactions" value="1"/>
</dbReference>
<dbReference type="STRING" id="10090.ENSMUSP00000091306"/>
<dbReference type="iPTMnet" id="Q3UPP8"/>
<dbReference type="PhosphoSitePlus" id="Q3UPP8"/>
<dbReference type="jPOST" id="Q3UPP8"/>
<dbReference type="PaxDb" id="10090-ENSMUSP00000091306"/>
<dbReference type="PeptideAtlas" id="Q3UPP8"/>
<dbReference type="ProteomicsDB" id="281377">
    <molecule id="Q3UPP8-1"/>
</dbReference>
<dbReference type="ProteomicsDB" id="281378">
    <molecule id="Q3UPP8-2"/>
</dbReference>
<dbReference type="ProteomicsDB" id="281379">
    <molecule id="Q3UPP8-3"/>
</dbReference>
<dbReference type="Antibodypedia" id="46695">
    <property type="antibodies" value="216 antibodies from 25 providers"/>
</dbReference>
<dbReference type="Ensembl" id="ENSMUST00000162655.9">
    <molecule id="Q3UPP8-3"/>
    <property type="protein sequence ID" value="ENSMUSP00000125621.2"/>
    <property type="gene ID" value="ENSMUSG00000032534.19"/>
</dbReference>
<dbReference type="GeneID" id="28135"/>
<dbReference type="UCSC" id="uc009rfs.1">
    <molecule id="Q3UPP8-1"/>
    <property type="organism name" value="mouse"/>
</dbReference>
<dbReference type="AGR" id="MGI:2158560"/>
<dbReference type="MGI" id="MGI:2158560">
    <property type="gene designation" value="Cep63"/>
</dbReference>
<dbReference type="VEuPathDB" id="HostDB:ENSMUSG00000032534"/>
<dbReference type="eggNOG" id="ENOG502QRYU">
    <property type="taxonomic scope" value="Eukaryota"/>
</dbReference>
<dbReference type="GeneTree" id="ENSGT00940000153190"/>
<dbReference type="HOGENOM" id="CLU_027471_0_0_1"/>
<dbReference type="InParanoid" id="Q3UPP8"/>
<dbReference type="PhylomeDB" id="Q3UPP8"/>
<dbReference type="Reactome" id="R-MMU-2565942">
    <property type="pathway name" value="Regulation of PLK1 Activity at G2/M Transition"/>
</dbReference>
<dbReference type="Reactome" id="R-MMU-380259">
    <property type="pathway name" value="Loss of Nlp from mitotic centrosomes"/>
</dbReference>
<dbReference type="Reactome" id="R-MMU-380270">
    <property type="pathway name" value="Recruitment of mitotic centrosome proteins and complexes"/>
</dbReference>
<dbReference type="Reactome" id="R-MMU-380284">
    <property type="pathway name" value="Loss of proteins required for interphase microtubule organization from the centrosome"/>
</dbReference>
<dbReference type="Reactome" id="R-MMU-380320">
    <property type="pathway name" value="Recruitment of NuMA to mitotic centrosomes"/>
</dbReference>
<dbReference type="Reactome" id="R-MMU-5620912">
    <property type="pathway name" value="Anchoring of the basal body to the plasma membrane"/>
</dbReference>
<dbReference type="Reactome" id="R-MMU-8854518">
    <property type="pathway name" value="AURKA Activation by TPX2"/>
</dbReference>
<dbReference type="BioGRID-ORCS" id="28135">
    <property type="hits" value="1 hit in 62 CRISPR screens"/>
</dbReference>
<dbReference type="ChiTaRS" id="Cep63">
    <property type="organism name" value="mouse"/>
</dbReference>
<dbReference type="PRO" id="PR:Q3UPP8"/>
<dbReference type="Proteomes" id="UP000000589">
    <property type="component" value="Chromosome 9"/>
</dbReference>
<dbReference type="RNAct" id="Q3UPP8">
    <property type="molecule type" value="protein"/>
</dbReference>
<dbReference type="Bgee" id="ENSMUSG00000032534">
    <property type="expression patterns" value="Expressed in spermatid and 225 other cell types or tissues"/>
</dbReference>
<dbReference type="ExpressionAtlas" id="Q3UPP8">
    <property type="expression patterns" value="baseline and differential"/>
</dbReference>
<dbReference type="GO" id="GO:0034451">
    <property type="term" value="C:centriolar satellite"/>
    <property type="evidence" value="ECO:0007669"/>
    <property type="project" value="UniProtKB-SubCell"/>
</dbReference>
<dbReference type="GO" id="GO:0005814">
    <property type="term" value="C:centriole"/>
    <property type="evidence" value="ECO:0000314"/>
    <property type="project" value="UniProtKB"/>
</dbReference>
<dbReference type="GO" id="GO:0005813">
    <property type="term" value="C:centrosome"/>
    <property type="evidence" value="ECO:0000314"/>
    <property type="project" value="MGI"/>
</dbReference>
<dbReference type="GO" id="GO:0005737">
    <property type="term" value="C:cytoplasm"/>
    <property type="evidence" value="ECO:0007669"/>
    <property type="project" value="UniProtKB-KW"/>
</dbReference>
<dbReference type="GO" id="GO:0000922">
    <property type="term" value="C:spindle pole"/>
    <property type="evidence" value="ECO:0000250"/>
    <property type="project" value="UniProtKB"/>
</dbReference>
<dbReference type="GO" id="GO:1990380">
    <property type="term" value="F:K48-linked deubiquitinase activity"/>
    <property type="evidence" value="ECO:0000250"/>
    <property type="project" value="UniProtKB"/>
</dbReference>
<dbReference type="GO" id="GO:0051301">
    <property type="term" value="P:cell division"/>
    <property type="evidence" value="ECO:0007669"/>
    <property type="project" value="UniProtKB-KW"/>
</dbReference>
<dbReference type="GO" id="GO:0007099">
    <property type="term" value="P:centriole replication"/>
    <property type="evidence" value="ECO:0000315"/>
    <property type="project" value="UniProtKB"/>
</dbReference>
<dbReference type="GO" id="GO:0051298">
    <property type="term" value="P:centrosome duplication"/>
    <property type="evidence" value="ECO:0000315"/>
    <property type="project" value="MGI"/>
</dbReference>
<dbReference type="GO" id="GO:0000077">
    <property type="term" value="P:DNA damage checkpoint signaling"/>
    <property type="evidence" value="ECO:0000250"/>
    <property type="project" value="UniProtKB"/>
</dbReference>
<dbReference type="GO" id="GO:0072332">
    <property type="term" value="P:intrinsic apoptotic signaling pathway by p53 class mediator"/>
    <property type="evidence" value="ECO:0000316"/>
    <property type="project" value="MGI"/>
</dbReference>
<dbReference type="GO" id="GO:0045141">
    <property type="term" value="P:meiotic telomere clustering"/>
    <property type="evidence" value="ECO:0000315"/>
    <property type="project" value="MGI"/>
</dbReference>
<dbReference type="GO" id="GO:1902254">
    <property type="term" value="P:negative regulation of intrinsic apoptotic signaling pathway by p53 class mediator"/>
    <property type="evidence" value="ECO:0000316"/>
    <property type="project" value="MGI"/>
</dbReference>
<dbReference type="GO" id="GO:1900045">
    <property type="term" value="P:negative regulation of protein K63-linked ubiquitination"/>
    <property type="evidence" value="ECO:0000250"/>
    <property type="project" value="UniProtKB"/>
</dbReference>
<dbReference type="GO" id="GO:0071539">
    <property type="term" value="P:protein localization to centrosome"/>
    <property type="evidence" value="ECO:0000315"/>
    <property type="project" value="MGI"/>
</dbReference>
<dbReference type="GO" id="GO:0050821">
    <property type="term" value="P:protein stabilization"/>
    <property type="evidence" value="ECO:0000250"/>
    <property type="project" value="UniProtKB"/>
</dbReference>
<dbReference type="GO" id="GO:0007131">
    <property type="term" value="P:reciprocal meiotic recombination"/>
    <property type="evidence" value="ECO:0000315"/>
    <property type="project" value="MGI"/>
</dbReference>
<dbReference type="GO" id="GO:0042770">
    <property type="term" value="P:signal transduction in response to DNA damage"/>
    <property type="evidence" value="ECO:0000250"/>
    <property type="project" value="UniProtKB"/>
</dbReference>
<dbReference type="GO" id="GO:0051225">
    <property type="term" value="P:spindle assembly"/>
    <property type="evidence" value="ECO:0000250"/>
    <property type="project" value="UniProtKB"/>
</dbReference>
<dbReference type="InterPro" id="IPR031470">
    <property type="entry name" value="Cep63/Deup1_N"/>
</dbReference>
<dbReference type="PANTHER" id="PTHR18875:SF7">
    <property type="entry name" value="CENTROSOMAL PROTEIN OF 63 KDA"/>
    <property type="match status" value="1"/>
</dbReference>
<dbReference type="PANTHER" id="PTHR18875">
    <property type="entry name" value="SARCOMA ANTIGEN NY-SAR-24/CYTOSKELETAL PROTEIN SOJO"/>
    <property type="match status" value="1"/>
</dbReference>
<dbReference type="Pfam" id="PF17045">
    <property type="entry name" value="CEP63"/>
    <property type="match status" value="1"/>
</dbReference>